<evidence type="ECO:0000255" key="1"/>
<evidence type="ECO:0000256" key="2">
    <source>
        <dbReference type="SAM" id="MobiDB-lite"/>
    </source>
</evidence>
<evidence type="ECO:0000269" key="3">
    <source>
    </source>
</evidence>
<evidence type="ECO:0000269" key="4">
    <source ref="2"/>
</evidence>
<evidence type="ECO:0000303" key="5">
    <source ref="2"/>
</evidence>
<evidence type="ECO:0000305" key="6"/>
<evidence type="ECO:0000305" key="7">
    <source ref="2"/>
</evidence>
<gene>
    <name evidence="5" type="primary">RxLR1</name>
</gene>
<dbReference type="EMBL" id="KX010946">
    <property type="protein sequence ID" value="ANC73366.1"/>
    <property type="molecule type" value="mRNA"/>
</dbReference>
<dbReference type="GO" id="GO:0005576">
    <property type="term" value="C:extracellular region"/>
    <property type="evidence" value="ECO:0007669"/>
    <property type="project" value="UniProtKB-SubCell"/>
</dbReference>
<dbReference type="GO" id="GO:0042025">
    <property type="term" value="C:host cell nucleus"/>
    <property type="evidence" value="ECO:0007669"/>
    <property type="project" value="UniProtKB-SubCell"/>
</dbReference>
<protein>
    <recommendedName>
        <fullName evidence="5">Secreted RxLR effector protein 1</fullName>
    </recommendedName>
</protein>
<proteinExistence type="evidence at transcript level"/>
<sequence>MFCRSPLVAVILLVLATHIVLALGDATRIAASETVPSDSSQTTRKSTRRTTSVDNKRRLRQQIMGKDGPVVNDVHAEERGFLNNKLAYKMFGDGLDMQEKIIKSGGKGLKNVLRKRLYNKVSRAEHRQVPATRH</sequence>
<reference key="1">
    <citation type="journal article" date="2016" name="Front. Microbiol.">
        <title>Studying the mechanism of Plasmopara viticola RxLR effectors on suppressing plant immunity.</title>
        <authorList>
            <person name="Xiang J."/>
            <person name="Li X."/>
            <person name="Wu J."/>
            <person name="Yin L."/>
            <person name="Zhang Y."/>
            <person name="Lu J."/>
        </authorList>
    </citation>
    <scope>NUCLEOTIDE SEQUENCE [MRNA]</scope>
    <scope>INDUCTION</scope>
    <scope>FUNCTION</scope>
    <scope>SUBCELLULAR LOCATION</scope>
    <source>
        <strain>ZJ-1-1</strain>
    </source>
</reference>
<reference key="2">
    <citation type="journal article" date="2015" name="Physiol. Mol. Plant Pathol.">
        <title>Characterization of the secretome of Plasmopara viticola by de novo transcriptome analysis.</title>
        <authorList>
            <person name="Yin L."/>
            <person name="Li X."/>
            <person name="Xiang J."/>
            <person name="Qu J."/>
            <person name="Zhang Y."/>
            <person name="Dry I.B."/>
            <person name="Lu J."/>
        </authorList>
    </citation>
    <scope>IDENTIFICATION</scope>
    <scope>INDUCTION</scope>
    <scope>FUNCTION</scope>
    <scope>DOMAIN</scope>
</reference>
<comment type="function">
    <text evidence="3 4">Effector that acts as a broad suppressor of cell death to interrupt plant immunity. Inhibits cell death induced by cell death-inducing proteins, including the PAMP elicitor INF1 from P.infestans.</text>
</comment>
<comment type="subcellular location">
    <subcellularLocation>
        <location evidence="3">Secreted</location>
    </subcellularLocation>
    <subcellularLocation>
        <location evidence="3">Host nucleus</location>
    </subcellularLocation>
</comment>
<comment type="induction">
    <text evidence="3 4">Expression is up-regulated at the earlier infection stages.</text>
</comment>
<comment type="domain">
    <text evidence="7">The RxLR-dEER motif acts to carry the protein into the host cell cytoplasm through binding to cell surface phosphatidylinositol-3-phosphate.</text>
</comment>
<comment type="similarity">
    <text evidence="6">Belongs to the RxLR effector family.</text>
</comment>
<keyword id="KW-1048">Host nucleus</keyword>
<keyword id="KW-0964">Secreted</keyword>
<keyword id="KW-0732">Signal</keyword>
<keyword id="KW-0843">Virulence</keyword>
<accession>A0A172M419</accession>
<feature type="signal peptide" evidence="1">
    <location>
        <begin position="1"/>
        <end position="22"/>
    </location>
</feature>
<feature type="chain" id="PRO_5007999416" description="Secreted RxLR effector protein 1">
    <location>
        <begin position="23"/>
        <end position="134"/>
    </location>
</feature>
<feature type="region of interest" description="Disordered" evidence="2">
    <location>
        <begin position="32"/>
        <end position="60"/>
    </location>
</feature>
<feature type="short sequence motif" description="RxLR-dEER" evidence="7">
    <location>
        <begin position="57"/>
        <end position="79"/>
    </location>
</feature>
<feature type="compositionally biased region" description="Low complexity" evidence="2">
    <location>
        <begin position="37"/>
        <end position="52"/>
    </location>
</feature>
<organism>
    <name type="scientific">Plasmopara viticola</name>
    <name type="common">Downy mildew of grapevine</name>
    <name type="synonym">Botrytis viticola</name>
    <dbReference type="NCBI Taxonomy" id="143451"/>
    <lineage>
        <taxon>Eukaryota</taxon>
        <taxon>Sar</taxon>
        <taxon>Stramenopiles</taxon>
        <taxon>Oomycota</taxon>
        <taxon>Peronosporales</taxon>
        <taxon>Peronosporaceae</taxon>
        <taxon>Plasmopara</taxon>
    </lineage>
</organism>
<name>RLR1_PLAVT</name>